<feature type="chain" id="PRO_0000447293" description="Agamous-like MADS-box protein FUL-L">
    <location>
        <begin position="1"/>
        <end position="247"/>
    </location>
</feature>
<feature type="domain" description="MADS-box" evidence="2">
    <location>
        <begin position="1"/>
        <end position="61"/>
    </location>
</feature>
<feature type="domain" description="K-box" evidence="3">
    <location>
        <begin position="88"/>
        <end position="178"/>
    </location>
</feature>
<feature type="region of interest" description="Disordered" evidence="4">
    <location>
        <begin position="224"/>
        <end position="247"/>
    </location>
</feature>
<feature type="sequence conflict" description="In Ref. 1; AAT07448, 3; ACZ26529 and 2; AAP32475." evidence="9" ref="1 3 2">
    <original>S</original>
    <variation>T</variation>
    <location>
        <position position="59"/>
    </location>
</feature>
<feature type="sequence conflict" description="In Ref. 2; AAP32475." evidence="9" ref="2">
    <original>Q</original>
    <variation>L</variation>
    <location>
        <position position="130"/>
    </location>
</feature>
<feature type="sequence conflict" description="In Ref. 3; ACZ26529 and 2; AAP32475." evidence="9" ref="3 2">
    <original>I</original>
    <variation>M</variation>
    <location>
        <position position="213"/>
    </location>
</feature>
<comment type="function">
    <text evidence="1">Probable transcription factor involved in flower development.</text>
</comment>
<comment type="subcellular location">
    <subcellularLocation>
        <location evidence="2">Nucleus</location>
    </subcellularLocation>
</comment>
<comment type="tissue specificity">
    <text evidence="5">Expressed in tendrils and flowers.</text>
</comment>
<gene>
    <name evidence="6" type="primary">FULL</name>
    <name evidence="11" type="ordered locus">VIT_14s0083g01030</name>
</gene>
<proteinExistence type="evidence at transcript level"/>
<dbReference type="EMBL" id="AY538747">
    <property type="protein sequence ID" value="AAT07448.1"/>
    <property type="molecule type" value="mRNA"/>
</dbReference>
<dbReference type="EMBL" id="AY275713">
    <property type="protein sequence ID" value="AAP32475.1"/>
    <property type="molecule type" value="mRNA"/>
</dbReference>
<dbReference type="EMBL" id="GU133635">
    <property type="protein sequence ID" value="ACZ26529.1"/>
    <property type="molecule type" value="mRNA"/>
</dbReference>
<dbReference type="EMBL" id="FN597038">
    <property type="protein sequence ID" value="CBI16934.3"/>
    <property type="molecule type" value="Genomic_DNA"/>
</dbReference>
<dbReference type="RefSeq" id="NP_001268211.1">
    <property type="nucleotide sequence ID" value="NM_001281282.1"/>
</dbReference>
<dbReference type="RefSeq" id="XP_010660493.1">
    <property type="nucleotide sequence ID" value="XM_010662191.2"/>
</dbReference>
<dbReference type="SMR" id="D7SMN6"/>
<dbReference type="STRING" id="29760.D7SMN6"/>
<dbReference type="PaxDb" id="29760-VIT_14s0083g01030.t01"/>
<dbReference type="EnsemblPlants" id="Vitvi14g01341_t001">
    <property type="protein sequence ID" value="Vitvi14g01341_P001"/>
    <property type="gene ID" value="Vitvi14g01341"/>
</dbReference>
<dbReference type="GeneID" id="100232953"/>
<dbReference type="Gramene" id="Vitvi14g01341_t001">
    <property type="protein sequence ID" value="Vitvi14g01341_P001"/>
    <property type="gene ID" value="Vitvi14g01341"/>
</dbReference>
<dbReference type="KEGG" id="vvi:100232953"/>
<dbReference type="eggNOG" id="KOG0014">
    <property type="taxonomic scope" value="Eukaryota"/>
</dbReference>
<dbReference type="HOGENOM" id="CLU_053053_0_2_1"/>
<dbReference type="InParanoid" id="D7SMN6"/>
<dbReference type="OMA" id="NERNAAM"/>
<dbReference type="OrthoDB" id="1933443at2759"/>
<dbReference type="Proteomes" id="UP000009183">
    <property type="component" value="Chromosome 14"/>
</dbReference>
<dbReference type="ExpressionAtlas" id="D7SMN6">
    <property type="expression patterns" value="baseline and differential"/>
</dbReference>
<dbReference type="GO" id="GO:0005634">
    <property type="term" value="C:nucleus"/>
    <property type="evidence" value="ECO:0007669"/>
    <property type="project" value="UniProtKB-SubCell"/>
</dbReference>
<dbReference type="GO" id="GO:0000981">
    <property type="term" value="F:DNA-binding transcription factor activity, RNA polymerase II-specific"/>
    <property type="evidence" value="ECO:0000318"/>
    <property type="project" value="GO_Central"/>
</dbReference>
<dbReference type="GO" id="GO:0046983">
    <property type="term" value="F:protein dimerization activity"/>
    <property type="evidence" value="ECO:0007669"/>
    <property type="project" value="InterPro"/>
</dbReference>
<dbReference type="GO" id="GO:0000978">
    <property type="term" value="F:RNA polymerase II cis-regulatory region sequence-specific DNA binding"/>
    <property type="evidence" value="ECO:0000318"/>
    <property type="project" value="GO_Central"/>
</dbReference>
<dbReference type="GO" id="GO:0009908">
    <property type="term" value="P:flower development"/>
    <property type="evidence" value="ECO:0007669"/>
    <property type="project" value="UniProtKB-KW"/>
</dbReference>
<dbReference type="GO" id="GO:0045944">
    <property type="term" value="P:positive regulation of transcription by RNA polymerase II"/>
    <property type="evidence" value="ECO:0007669"/>
    <property type="project" value="InterPro"/>
</dbReference>
<dbReference type="GO" id="GO:0006357">
    <property type="term" value="P:regulation of transcription by RNA polymerase II"/>
    <property type="evidence" value="ECO:0000318"/>
    <property type="project" value="GO_Central"/>
</dbReference>
<dbReference type="CDD" id="cd00265">
    <property type="entry name" value="MADS_MEF2_like"/>
    <property type="match status" value="1"/>
</dbReference>
<dbReference type="FunFam" id="3.40.1810.10:FF:000003">
    <property type="entry name" value="MADS-box transcription factor MADS-MC"/>
    <property type="match status" value="1"/>
</dbReference>
<dbReference type="Gene3D" id="3.40.1810.10">
    <property type="entry name" value="Transcription factor, MADS-box"/>
    <property type="match status" value="1"/>
</dbReference>
<dbReference type="InterPro" id="IPR050142">
    <property type="entry name" value="MADS-box/MEF2_TF"/>
</dbReference>
<dbReference type="InterPro" id="IPR033896">
    <property type="entry name" value="MEF2-like_N"/>
</dbReference>
<dbReference type="InterPro" id="IPR002487">
    <property type="entry name" value="TF_Kbox"/>
</dbReference>
<dbReference type="InterPro" id="IPR002100">
    <property type="entry name" value="TF_MADSbox"/>
</dbReference>
<dbReference type="InterPro" id="IPR036879">
    <property type="entry name" value="TF_MADSbox_sf"/>
</dbReference>
<dbReference type="PANTHER" id="PTHR48019">
    <property type="entry name" value="SERUM RESPONSE FACTOR HOMOLOG"/>
    <property type="match status" value="1"/>
</dbReference>
<dbReference type="Pfam" id="PF01486">
    <property type="entry name" value="K-box"/>
    <property type="match status" value="1"/>
</dbReference>
<dbReference type="Pfam" id="PF00319">
    <property type="entry name" value="SRF-TF"/>
    <property type="match status" value="1"/>
</dbReference>
<dbReference type="PRINTS" id="PR00404">
    <property type="entry name" value="MADSDOMAIN"/>
</dbReference>
<dbReference type="SMART" id="SM00432">
    <property type="entry name" value="MADS"/>
    <property type="match status" value="1"/>
</dbReference>
<dbReference type="SUPFAM" id="SSF55455">
    <property type="entry name" value="SRF-like"/>
    <property type="match status" value="1"/>
</dbReference>
<dbReference type="PROSITE" id="PS51297">
    <property type="entry name" value="K_BOX"/>
    <property type="match status" value="1"/>
</dbReference>
<dbReference type="PROSITE" id="PS00350">
    <property type="entry name" value="MADS_BOX_1"/>
    <property type="match status" value="1"/>
</dbReference>
<dbReference type="PROSITE" id="PS50066">
    <property type="entry name" value="MADS_BOX_2"/>
    <property type="match status" value="1"/>
</dbReference>
<name>FULL_VITVI</name>
<keyword id="KW-0238">DNA-binding</keyword>
<keyword id="KW-0287">Flowering</keyword>
<keyword id="KW-0539">Nucleus</keyword>
<keyword id="KW-1185">Reference proteome</keyword>
<keyword id="KW-0804">Transcription</keyword>
<keyword id="KW-0805">Transcription regulation</keyword>
<organism>
    <name type="scientific">Vitis vinifera</name>
    <name type="common">Grape</name>
    <dbReference type="NCBI Taxonomy" id="29760"/>
    <lineage>
        <taxon>Eukaryota</taxon>
        <taxon>Viridiplantae</taxon>
        <taxon>Streptophyta</taxon>
        <taxon>Embryophyta</taxon>
        <taxon>Tracheophyta</taxon>
        <taxon>Spermatophyta</taxon>
        <taxon>Magnoliopsida</taxon>
        <taxon>eudicotyledons</taxon>
        <taxon>Gunneridae</taxon>
        <taxon>Pentapetalae</taxon>
        <taxon>rosids</taxon>
        <taxon>Vitales</taxon>
        <taxon>Vitaceae</taxon>
        <taxon>Viteae</taxon>
        <taxon>Vitis</taxon>
    </lineage>
</organism>
<evidence type="ECO:0000250" key="1">
    <source>
        <dbReference type="UniProtKB" id="Q0HA25"/>
    </source>
</evidence>
<evidence type="ECO:0000255" key="2">
    <source>
        <dbReference type="PROSITE-ProRule" id="PRU00251"/>
    </source>
</evidence>
<evidence type="ECO:0000255" key="3">
    <source>
        <dbReference type="PROSITE-ProRule" id="PRU00629"/>
    </source>
</evidence>
<evidence type="ECO:0000256" key="4">
    <source>
        <dbReference type="SAM" id="MobiDB-lite"/>
    </source>
</evidence>
<evidence type="ECO:0000269" key="5">
    <source>
    </source>
</evidence>
<evidence type="ECO:0000303" key="6">
    <source>
    </source>
</evidence>
<evidence type="ECO:0000303" key="7">
    <source>
    </source>
</evidence>
<evidence type="ECO:0000303" key="8">
    <source>
    </source>
</evidence>
<evidence type="ECO:0000305" key="9"/>
<evidence type="ECO:0000312" key="10">
    <source>
        <dbReference type="EMBL" id="AAP32475.1"/>
    </source>
</evidence>
<evidence type="ECO:0000312" key="11">
    <source>
        <dbReference type="EMBL" id="CBI16934.3"/>
    </source>
</evidence>
<reference key="1">
    <citation type="journal article" date="2004" name="Plant Physiol.">
        <title>Floral meristem identity genes are expressed during tendril development in grapevine.</title>
        <authorList>
            <person name="Calonje M."/>
            <person name="Cubas P."/>
            <person name="Martinez-Zapater J.M."/>
            <person name="Carmona M.J."/>
        </authorList>
    </citation>
    <scope>NUCLEOTIDE SEQUENCE [MRNA]</scope>
    <scope>TISSUE SPECIFICITY</scope>
    <source>
        <strain>cv. Tempranillo</strain>
    </source>
</reference>
<reference key="2">
    <citation type="submission" date="2003-04" db="EMBL/GenBank/DDBJ databases">
        <title>Cloning and characterization of VvMADS6, an AP1-like gene in grapevine (Vitis vinifera) cultivar Cabernet Sauvignon.</title>
        <authorList>
            <person name="Sreekantan L."/>
            <person name="Iocco P."/>
            <person name="Thomas M.R."/>
        </authorList>
    </citation>
    <scope>NUCLEOTIDE SEQUENCE [MRNA]</scope>
    <source>
        <strain>cv. Cabernet Sauvignon</strain>
    </source>
</reference>
<reference key="3">
    <citation type="submission" date="2009-10" db="EMBL/GenBank/DDBJ databases">
        <title>Characterization of seven important genes involved in grapevine flower development.</title>
        <authorList>
            <person name="Fang J.G."/>
            <person name="Yang G."/>
            <person name="Song C.N."/>
            <person name="Wang C."/>
            <person name="Cao X."/>
        </authorList>
    </citation>
    <scope>NUCLEOTIDE SEQUENCE [MRNA]</scope>
    <source>
        <strain>cv. Xiangyue</strain>
        <tissue>Flower</tissue>
    </source>
</reference>
<reference key="4">
    <citation type="journal article" date="2007" name="Nature">
        <title>The grapevine genome sequence suggests ancestral hexaploidization in major angiosperm phyla.</title>
        <authorList>
            <person name="Jaillon O."/>
            <person name="Aury J.-M."/>
            <person name="Noel B."/>
            <person name="Policriti A."/>
            <person name="Clepet C."/>
            <person name="Casagrande A."/>
            <person name="Choisne N."/>
            <person name="Aubourg S."/>
            <person name="Vitulo N."/>
            <person name="Jubin C."/>
            <person name="Vezzi A."/>
            <person name="Legeai F."/>
            <person name="Hugueney P."/>
            <person name="Dasilva C."/>
            <person name="Horner D."/>
            <person name="Mica E."/>
            <person name="Jublot D."/>
            <person name="Poulain J."/>
            <person name="Bruyere C."/>
            <person name="Billault A."/>
            <person name="Segurens B."/>
            <person name="Gouyvenoux M."/>
            <person name="Ugarte E."/>
            <person name="Cattonaro F."/>
            <person name="Anthouard V."/>
            <person name="Vico V."/>
            <person name="Del Fabbro C."/>
            <person name="Alaux M."/>
            <person name="Di Gaspero G."/>
            <person name="Dumas V."/>
            <person name="Felice N."/>
            <person name="Paillard S."/>
            <person name="Juman I."/>
            <person name="Moroldo M."/>
            <person name="Scalabrin S."/>
            <person name="Canaguier A."/>
            <person name="Le Clainche I."/>
            <person name="Malacrida G."/>
            <person name="Durand E."/>
            <person name="Pesole G."/>
            <person name="Laucou V."/>
            <person name="Chatelet P."/>
            <person name="Merdinoglu D."/>
            <person name="Delledonne M."/>
            <person name="Pezzotti M."/>
            <person name="Lecharny A."/>
            <person name="Scarpelli C."/>
            <person name="Artiguenave F."/>
            <person name="Pe M.E."/>
            <person name="Valle G."/>
            <person name="Morgante M."/>
            <person name="Caboche M."/>
            <person name="Adam-Blondon A.-F."/>
            <person name="Weissenbach J."/>
            <person name="Quetier F."/>
            <person name="Wincker P."/>
        </authorList>
    </citation>
    <scope>NUCLEOTIDE SEQUENCE [LARGE SCALE GENOMIC DNA]</scope>
    <source>
        <strain>cv. Pinot noir / PN40024</strain>
    </source>
</reference>
<reference key="5">
    <citation type="journal article" date="2009" name="Plant Physiol.">
        <title>Genome-wide analysis of MIKCC-type MADS box genes in grapevine.</title>
        <authorList>
            <person name="Diaz-Riquelme J."/>
            <person name="Lijavetzky D."/>
            <person name="Martinez-Zapater J.M."/>
            <person name="Carmona M.J."/>
        </authorList>
    </citation>
    <scope>GENE FAMILY</scope>
</reference>
<reference key="6">
    <citation type="journal article" date="2016" name="BMC Genomics">
        <title>Structural and functional annotation of the MADS-box transcription factor family in grapevine.</title>
        <authorList>
            <person name="Grimplet J."/>
            <person name="Martinez-Zapater J.M."/>
            <person name="Carmona M.J."/>
        </authorList>
    </citation>
    <scope>GENE FAMILY</scope>
</reference>
<sequence length="247" mass="28432">MGRGRVQLKRIENKISRQVTFSKRRSGLLKKAHEISVLCDAEVALIVFSTKGKLFEYSSDSSMERILERYERYSLSERQLLSTDPDPQGNWSMDYPKLTARIEVLQRNLRHFVGEDLDPLSLRELQNLEQQLDTALKRIRTRKNQLMHESISELQKKEKSLVEQNNALAKKVKEKEKVEQNNRAQWEQQNNIGQNSSAYVVPPPPLQLPSLTIGGSFVGRAVEEDGAEARPSPNTLMPPWMLRHVNE</sequence>
<accession>D7SMN6</accession>
<accession>D1MDP9</accession>
<accession>Q6E6S6</accession>
<accession>Q84LP9</accession>
<protein>
    <recommendedName>
        <fullName evidence="9">Agamous-like MADS-box protein FUL-L</fullName>
    </recommendedName>
    <alternativeName>
        <fullName evidence="6">FUL-like protein</fullName>
        <shortName evidence="7">VvFUL-L</shortName>
    </alternativeName>
    <alternativeName>
        <fullName evidence="10">MADS-box protein 6</fullName>
        <shortName evidence="10">VvMADS6</shortName>
    </alternativeName>
    <alternativeName>
        <fullName evidence="8">VviFUL2</fullName>
    </alternativeName>
</protein>